<sequence>MIYIDNRQNSITVDENLQNTIREVIDYALKEEGMKISYEVSVIFVDNETIREINRENREVDKVTDVLSFPMLEYGEGKVFKDIYEECDFEDEYFDEGNLVLGDIALSLERAEEQSKEYGHSFLREAAYLTVHSVLHLMGYDHMVDEDKIKMRKREEEILSHFDINR</sequence>
<organism>
    <name type="scientific">Clostridium acetobutylicum (strain ATCC 824 / DSM 792 / JCM 1419 / IAM 19013 / LMG 5710 / NBRC 13948 / NRRL B-527 / VKM B-1787 / 2291 / W)</name>
    <dbReference type="NCBI Taxonomy" id="272562"/>
    <lineage>
        <taxon>Bacteria</taxon>
        <taxon>Bacillati</taxon>
        <taxon>Bacillota</taxon>
        <taxon>Clostridia</taxon>
        <taxon>Eubacteriales</taxon>
        <taxon>Clostridiaceae</taxon>
        <taxon>Clostridium</taxon>
    </lineage>
</organism>
<accession>Q97JI7</accession>
<feature type="chain" id="PRO_0000102440" description="Endoribonuclease YbeY">
    <location>
        <begin position="1"/>
        <end position="166"/>
    </location>
</feature>
<feature type="binding site" evidence="1">
    <location>
        <position position="132"/>
    </location>
    <ligand>
        <name>Zn(2+)</name>
        <dbReference type="ChEBI" id="CHEBI:29105"/>
        <note>catalytic</note>
    </ligand>
</feature>
<feature type="binding site" evidence="1">
    <location>
        <position position="136"/>
    </location>
    <ligand>
        <name>Zn(2+)</name>
        <dbReference type="ChEBI" id="CHEBI:29105"/>
        <note>catalytic</note>
    </ligand>
</feature>
<feature type="binding site" evidence="1">
    <location>
        <position position="142"/>
    </location>
    <ligand>
        <name>Zn(2+)</name>
        <dbReference type="ChEBI" id="CHEBI:29105"/>
        <note>catalytic</note>
    </ligand>
</feature>
<comment type="function">
    <text evidence="1">Single strand-specific metallo-endoribonuclease involved in late-stage 70S ribosome quality control and in maturation of the 3' terminus of the 16S rRNA.</text>
</comment>
<comment type="cofactor">
    <cofactor evidence="1">
        <name>Zn(2+)</name>
        <dbReference type="ChEBI" id="CHEBI:29105"/>
    </cofactor>
    <text evidence="1">Binds 1 zinc ion.</text>
</comment>
<comment type="subcellular location">
    <subcellularLocation>
        <location evidence="1">Cytoplasm</location>
    </subcellularLocation>
</comment>
<comment type="similarity">
    <text evidence="1">Belongs to the endoribonuclease YbeY family.</text>
</comment>
<dbReference type="EC" id="3.1.-.-" evidence="1"/>
<dbReference type="EMBL" id="AE001437">
    <property type="protein sequence ID" value="AAK79264.1"/>
    <property type="molecule type" value="Genomic_DNA"/>
</dbReference>
<dbReference type="PIR" id="E97059">
    <property type="entry name" value="E97059"/>
</dbReference>
<dbReference type="RefSeq" id="NP_347924.1">
    <property type="nucleotide sequence ID" value="NC_003030.1"/>
</dbReference>
<dbReference type="RefSeq" id="WP_010964605.1">
    <property type="nucleotide sequence ID" value="NC_003030.1"/>
</dbReference>
<dbReference type="SMR" id="Q97JI7"/>
<dbReference type="STRING" id="272562.CA_C1293"/>
<dbReference type="GeneID" id="44997799"/>
<dbReference type="KEGG" id="cac:CA_C1293"/>
<dbReference type="PATRIC" id="fig|272562.8.peg.1494"/>
<dbReference type="eggNOG" id="COG0319">
    <property type="taxonomic scope" value="Bacteria"/>
</dbReference>
<dbReference type="HOGENOM" id="CLU_106710_3_0_9"/>
<dbReference type="OrthoDB" id="9807740at2"/>
<dbReference type="Proteomes" id="UP000000814">
    <property type="component" value="Chromosome"/>
</dbReference>
<dbReference type="GO" id="GO:0005737">
    <property type="term" value="C:cytoplasm"/>
    <property type="evidence" value="ECO:0007669"/>
    <property type="project" value="UniProtKB-SubCell"/>
</dbReference>
<dbReference type="GO" id="GO:0004222">
    <property type="term" value="F:metalloendopeptidase activity"/>
    <property type="evidence" value="ECO:0007669"/>
    <property type="project" value="InterPro"/>
</dbReference>
<dbReference type="GO" id="GO:0004521">
    <property type="term" value="F:RNA endonuclease activity"/>
    <property type="evidence" value="ECO:0007669"/>
    <property type="project" value="UniProtKB-UniRule"/>
</dbReference>
<dbReference type="GO" id="GO:0008270">
    <property type="term" value="F:zinc ion binding"/>
    <property type="evidence" value="ECO:0007669"/>
    <property type="project" value="UniProtKB-UniRule"/>
</dbReference>
<dbReference type="GO" id="GO:0006364">
    <property type="term" value="P:rRNA processing"/>
    <property type="evidence" value="ECO:0007669"/>
    <property type="project" value="UniProtKB-UniRule"/>
</dbReference>
<dbReference type="Gene3D" id="3.40.390.30">
    <property type="entry name" value="Metalloproteases ('zincins'), catalytic domain"/>
    <property type="match status" value="1"/>
</dbReference>
<dbReference type="HAMAP" id="MF_00009">
    <property type="entry name" value="Endoribonucl_YbeY"/>
    <property type="match status" value="1"/>
</dbReference>
<dbReference type="InterPro" id="IPR023091">
    <property type="entry name" value="MetalPrtase_cat_dom_sf_prd"/>
</dbReference>
<dbReference type="InterPro" id="IPR002036">
    <property type="entry name" value="YbeY"/>
</dbReference>
<dbReference type="InterPro" id="IPR020549">
    <property type="entry name" value="YbeY_CS"/>
</dbReference>
<dbReference type="NCBIfam" id="TIGR00043">
    <property type="entry name" value="rRNA maturation RNase YbeY"/>
    <property type="match status" value="1"/>
</dbReference>
<dbReference type="PANTHER" id="PTHR46986">
    <property type="entry name" value="ENDORIBONUCLEASE YBEY, CHLOROPLASTIC"/>
    <property type="match status" value="1"/>
</dbReference>
<dbReference type="PANTHER" id="PTHR46986:SF1">
    <property type="entry name" value="ENDORIBONUCLEASE YBEY, CHLOROPLASTIC"/>
    <property type="match status" value="1"/>
</dbReference>
<dbReference type="Pfam" id="PF02130">
    <property type="entry name" value="YbeY"/>
    <property type="match status" value="1"/>
</dbReference>
<dbReference type="SUPFAM" id="SSF55486">
    <property type="entry name" value="Metalloproteases ('zincins'), catalytic domain"/>
    <property type="match status" value="1"/>
</dbReference>
<dbReference type="PROSITE" id="PS01306">
    <property type="entry name" value="UPF0054"/>
    <property type="match status" value="1"/>
</dbReference>
<name>YBEY_CLOAB</name>
<gene>
    <name evidence="1" type="primary">ybeY</name>
    <name type="ordered locus">CA_C1293</name>
</gene>
<proteinExistence type="inferred from homology"/>
<evidence type="ECO:0000255" key="1">
    <source>
        <dbReference type="HAMAP-Rule" id="MF_00009"/>
    </source>
</evidence>
<reference key="1">
    <citation type="journal article" date="2001" name="J. Bacteriol.">
        <title>Genome sequence and comparative analysis of the solvent-producing bacterium Clostridium acetobutylicum.</title>
        <authorList>
            <person name="Noelling J."/>
            <person name="Breton G."/>
            <person name="Omelchenko M.V."/>
            <person name="Makarova K.S."/>
            <person name="Zeng Q."/>
            <person name="Gibson R."/>
            <person name="Lee H.M."/>
            <person name="Dubois J."/>
            <person name="Qiu D."/>
            <person name="Hitti J."/>
            <person name="Wolf Y.I."/>
            <person name="Tatusov R.L."/>
            <person name="Sabathe F."/>
            <person name="Doucette-Stamm L.A."/>
            <person name="Soucaille P."/>
            <person name="Daly M.J."/>
            <person name="Bennett G.N."/>
            <person name="Koonin E.V."/>
            <person name="Smith D.R."/>
        </authorList>
    </citation>
    <scope>NUCLEOTIDE SEQUENCE [LARGE SCALE GENOMIC DNA]</scope>
    <source>
        <strain>ATCC 824 / DSM 792 / JCM 1419 / IAM 19013 / LMG 5710 / NBRC 13948 / NRRL B-527 / VKM B-1787 / 2291 / W</strain>
    </source>
</reference>
<keyword id="KW-0963">Cytoplasm</keyword>
<keyword id="KW-0255">Endonuclease</keyword>
<keyword id="KW-0378">Hydrolase</keyword>
<keyword id="KW-0479">Metal-binding</keyword>
<keyword id="KW-0540">Nuclease</keyword>
<keyword id="KW-1185">Reference proteome</keyword>
<keyword id="KW-0690">Ribosome biogenesis</keyword>
<keyword id="KW-0698">rRNA processing</keyword>
<keyword id="KW-0862">Zinc</keyword>
<protein>
    <recommendedName>
        <fullName evidence="1">Endoribonuclease YbeY</fullName>
        <ecNumber evidence="1">3.1.-.-</ecNumber>
    </recommendedName>
</protein>